<sequence>MPEPAKSAPAPKKGSKKAVTKTQKKGDKKRKRARKESYSIYVYKVLKQVHPDTGISSKAMSIMNSFVNDIFERIAGEASRLAHYNKRSTITSREIQTAVRLLLPGELAKHAVSEGTKAVTKYTSSK</sequence>
<gene>
    <name type="primary">H2B-VII</name>
</gene>
<protein>
    <recommendedName>
        <fullName>Histone H2B 7</fullName>
    </recommendedName>
    <alternativeName>
        <fullName>H2B VII</fullName>
    </alternativeName>
</protein>
<dbReference type="EMBL" id="X05099">
    <property type="protein sequence ID" value="CAA28750.1"/>
    <property type="molecule type" value="Genomic_DNA"/>
</dbReference>
<dbReference type="EMBL" id="U37575">
    <property type="protein sequence ID" value="AAC60000.1"/>
    <property type="molecule type" value="Genomic_DNA"/>
</dbReference>
<dbReference type="RefSeq" id="XP_015144978.1">
    <property type="nucleotide sequence ID" value="XM_015289492.1"/>
</dbReference>
<dbReference type="PDB" id="1EQZ">
    <property type="method" value="X-ray"/>
    <property type="resolution" value="2.50 A"/>
    <property type="chains" value="B/F=1-126"/>
</dbReference>
<dbReference type="PDB" id="1HIO">
    <property type="method" value="X-ray"/>
    <property type="resolution" value="3.10 A"/>
    <property type="chains" value="B=37-126"/>
</dbReference>
<dbReference type="PDB" id="1HQ3">
    <property type="method" value="X-ray"/>
    <property type="resolution" value="2.15 A"/>
    <property type="chains" value="B/F=1-126"/>
</dbReference>
<dbReference type="PDB" id="1TZY">
    <property type="method" value="X-ray"/>
    <property type="resolution" value="1.90 A"/>
    <property type="chains" value="B/F=1-126"/>
</dbReference>
<dbReference type="PDB" id="2HIO">
    <property type="method" value="X-ray"/>
    <property type="resolution" value="3.10 A"/>
    <property type="chains" value="B=2-126"/>
</dbReference>
<dbReference type="PDB" id="3C9K">
    <property type="method" value="EM"/>
    <property type="resolution" value="20.00 A"/>
    <property type="chains" value="B/F=2-126"/>
</dbReference>
<dbReference type="PDBsum" id="1EQZ"/>
<dbReference type="PDBsum" id="1HIO"/>
<dbReference type="PDBsum" id="1HQ3"/>
<dbReference type="PDBsum" id="1TZY"/>
<dbReference type="PDBsum" id="2HIO"/>
<dbReference type="PDBsum" id="3C9K"/>
<dbReference type="EMDB" id="EMD-1469"/>
<dbReference type="SMR" id="P0C1H5"/>
<dbReference type="FunCoup" id="P0C1H5">
    <property type="interactions" value="711"/>
</dbReference>
<dbReference type="IntAct" id="P0C1H5">
    <property type="interactions" value="1"/>
</dbReference>
<dbReference type="STRING" id="9031.ENSGALP00000055900"/>
<dbReference type="GlyCosmos" id="P0C1H5">
    <property type="glycosylation" value="1 site, No reported glycans"/>
</dbReference>
<dbReference type="GlyGen" id="P0C1H5">
    <property type="glycosylation" value="1 site"/>
</dbReference>
<dbReference type="iPTMnet" id="P0C1H5"/>
<dbReference type="Ensembl" id="ENSGALT00000100610">
    <property type="protein sequence ID" value="ENSGALP00000069556"/>
    <property type="gene ID" value="ENSGALG00000057888"/>
</dbReference>
<dbReference type="Ensembl" id="ENSGALT00010034639.1">
    <property type="protein sequence ID" value="ENSGALP00010020330.1"/>
    <property type="gene ID" value="ENSGALG00010014403.1"/>
</dbReference>
<dbReference type="KEGG" id="gga:107053803"/>
<dbReference type="VEuPathDB" id="HostDB:geneid_429558"/>
<dbReference type="GeneTree" id="ENSGT01110000267181"/>
<dbReference type="InParanoid" id="P0C1H5"/>
<dbReference type="Reactome" id="R-GGA-201722">
    <property type="pathway name" value="Formation of the beta-catenin:TCF transactivating complex"/>
</dbReference>
<dbReference type="Reactome" id="R-GGA-212300">
    <property type="pathway name" value="PRC2 methylates histones and DNA"/>
</dbReference>
<dbReference type="Reactome" id="R-GGA-2299718">
    <property type="pathway name" value="Condensation of Prophase Chromosomes"/>
</dbReference>
<dbReference type="Reactome" id="R-GGA-2559580">
    <property type="pathway name" value="Oxidative Stress Induced Senescence"/>
</dbReference>
<dbReference type="Reactome" id="R-GGA-3214815">
    <property type="pathway name" value="HDACs deacetylate histones"/>
</dbReference>
<dbReference type="Reactome" id="R-GGA-3214847">
    <property type="pathway name" value="HATs acetylate histones"/>
</dbReference>
<dbReference type="Reactome" id="R-GGA-5250924">
    <property type="pathway name" value="B-WICH complex positively regulates rRNA expression"/>
</dbReference>
<dbReference type="Reactome" id="R-GGA-5578749">
    <property type="pathway name" value="Transcriptional regulation by small RNAs"/>
</dbReference>
<dbReference type="Reactome" id="R-GGA-5625886">
    <property type="pathway name" value="Activated PKN1 stimulates transcription of AR (androgen receptor) regulated genes KLK2 and KLK3"/>
</dbReference>
<dbReference type="Reactome" id="R-GGA-5689880">
    <property type="pathway name" value="Ub-specific processing proteases"/>
</dbReference>
<dbReference type="Reactome" id="R-GGA-5693565">
    <property type="pathway name" value="Recruitment and ATM-mediated phosphorylation of repair and signaling proteins at DNA double strand breaks"/>
</dbReference>
<dbReference type="Reactome" id="R-GGA-5693571">
    <property type="pathway name" value="Nonhomologous End-Joining (NHEJ)"/>
</dbReference>
<dbReference type="Reactome" id="R-GGA-5693607">
    <property type="pathway name" value="Processing of DNA double-strand break ends"/>
</dbReference>
<dbReference type="Reactome" id="R-GGA-606279">
    <property type="pathway name" value="Deposition of new CENPA-containing nucleosomes at the centromere"/>
</dbReference>
<dbReference type="Reactome" id="R-GGA-68616">
    <property type="pathway name" value="Assembly of the ORC complex at the origin of replication"/>
</dbReference>
<dbReference type="Reactome" id="R-GGA-69473">
    <property type="pathway name" value="G2/M DNA damage checkpoint"/>
</dbReference>
<dbReference type="Reactome" id="R-GGA-73728">
    <property type="pathway name" value="RNA Polymerase I Promoter Opening"/>
</dbReference>
<dbReference type="Reactome" id="R-GGA-73772">
    <property type="pathway name" value="RNA Polymerase I Promoter Escape"/>
</dbReference>
<dbReference type="Reactome" id="R-GGA-8936459">
    <property type="pathway name" value="RUNX1 regulates genes involved in megakaryocyte differentiation and platelet function"/>
</dbReference>
<dbReference type="Reactome" id="R-GGA-9018519">
    <property type="pathway name" value="Estrogen-dependent gene expression"/>
</dbReference>
<dbReference type="Reactome" id="R-GGA-9841922">
    <property type="pathway name" value="MLL4 and MLL3 complexes regulate expression of PPARG target genes in adipogenesis and hepatic steatosis"/>
</dbReference>
<dbReference type="Reactome" id="R-GGA-9843940">
    <property type="pathway name" value="Regulation of endogenous retroelements by KRAB-ZFP proteins"/>
</dbReference>
<dbReference type="Reactome" id="R-GGA-9843970">
    <property type="pathway name" value="Regulation of endogenous retroelements by the Human Silencing Hub (HUSH) complex"/>
</dbReference>
<dbReference type="EvolutionaryTrace" id="P0C1H5"/>
<dbReference type="PRO" id="PR:P0C1H5"/>
<dbReference type="Proteomes" id="UP000000539">
    <property type="component" value="Chromosome 1"/>
</dbReference>
<dbReference type="Bgee" id="ENSGALG00000036908">
    <property type="expression patterns" value="Expressed in granulocyte and 7 other cell types or tissues"/>
</dbReference>
<dbReference type="GO" id="GO:0000786">
    <property type="term" value="C:nucleosome"/>
    <property type="evidence" value="ECO:0007669"/>
    <property type="project" value="UniProtKB-KW"/>
</dbReference>
<dbReference type="GO" id="GO:0005634">
    <property type="term" value="C:nucleus"/>
    <property type="evidence" value="ECO:0007669"/>
    <property type="project" value="UniProtKB-SubCell"/>
</dbReference>
<dbReference type="GO" id="GO:0003677">
    <property type="term" value="F:DNA binding"/>
    <property type="evidence" value="ECO:0007669"/>
    <property type="project" value="UniProtKB-KW"/>
</dbReference>
<dbReference type="GO" id="GO:0046982">
    <property type="term" value="F:protein heterodimerization activity"/>
    <property type="evidence" value="ECO:0007669"/>
    <property type="project" value="InterPro"/>
</dbReference>
<dbReference type="GO" id="GO:0044877">
    <property type="term" value="F:protein-containing complex binding"/>
    <property type="evidence" value="ECO:0000250"/>
    <property type="project" value="UniProtKB"/>
</dbReference>
<dbReference type="GO" id="GO:0030527">
    <property type="term" value="F:structural constituent of chromatin"/>
    <property type="evidence" value="ECO:0007669"/>
    <property type="project" value="InterPro"/>
</dbReference>
<dbReference type="CDD" id="cd22910">
    <property type="entry name" value="HFD_H2B"/>
    <property type="match status" value="1"/>
</dbReference>
<dbReference type="FunFam" id="1.10.20.10:FF:000003">
    <property type="entry name" value="Histone H2B"/>
    <property type="match status" value="1"/>
</dbReference>
<dbReference type="Gene3D" id="1.10.20.10">
    <property type="entry name" value="Histone, subunit A"/>
    <property type="match status" value="1"/>
</dbReference>
<dbReference type="InterPro" id="IPR009072">
    <property type="entry name" value="Histone-fold"/>
</dbReference>
<dbReference type="InterPro" id="IPR007125">
    <property type="entry name" value="Histone_H2A/H2B/H3"/>
</dbReference>
<dbReference type="InterPro" id="IPR000558">
    <property type="entry name" value="Histone_H2B"/>
</dbReference>
<dbReference type="InterPro" id="IPR055333">
    <property type="entry name" value="HISTONE_H2B_site"/>
</dbReference>
<dbReference type="PANTHER" id="PTHR23428">
    <property type="entry name" value="HISTONE H2B"/>
    <property type="match status" value="1"/>
</dbReference>
<dbReference type="Pfam" id="PF00125">
    <property type="entry name" value="Histone"/>
    <property type="match status" value="1"/>
</dbReference>
<dbReference type="PRINTS" id="PR00621">
    <property type="entry name" value="HISTONEH2B"/>
</dbReference>
<dbReference type="SMART" id="SM00427">
    <property type="entry name" value="H2B"/>
    <property type="match status" value="1"/>
</dbReference>
<dbReference type="SUPFAM" id="SSF47113">
    <property type="entry name" value="Histone-fold"/>
    <property type="match status" value="1"/>
</dbReference>
<dbReference type="PROSITE" id="PS00357">
    <property type="entry name" value="HISTONE_H2B"/>
    <property type="match status" value="1"/>
</dbReference>
<feature type="initiator methionine" description="Removed" evidence="1">
    <location>
        <position position="1"/>
    </location>
</feature>
<feature type="chain" id="PRO_0000244865" description="Histone H2B 7">
    <location>
        <begin position="2"/>
        <end position="126"/>
    </location>
</feature>
<feature type="region of interest" description="Disordered" evidence="4">
    <location>
        <begin position="1"/>
        <end position="35"/>
    </location>
</feature>
<feature type="compositionally biased region" description="Low complexity" evidence="4">
    <location>
        <begin position="1"/>
        <end position="12"/>
    </location>
</feature>
<feature type="compositionally biased region" description="Basic residues" evidence="4">
    <location>
        <begin position="13"/>
        <end position="34"/>
    </location>
</feature>
<feature type="modified residue" description="N6-acetyllysine" evidence="6">
    <location>
        <position position="6"/>
    </location>
</feature>
<feature type="modified residue" description="N6-acetyllysine" evidence="6">
    <location>
        <position position="13"/>
    </location>
</feature>
<feature type="modified residue" description="Phosphoserine" evidence="5">
    <location>
        <position position="15"/>
    </location>
</feature>
<feature type="modified residue" description="N6-acetyllysine" evidence="6">
    <location>
        <position position="16"/>
    </location>
</feature>
<feature type="modified residue" description="N6-acetyllysine" evidence="6">
    <location>
        <position position="21"/>
    </location>
</feature>
<feature type="glycosylation site" description="O-linked (GlcNAc) serine" evidence="3">
    <location>
        <position position="113"/>
    </location>
</feature>
<feature type="cross-link" description="Glycyl lysine isopeptide (Lys-Gly) (interchain with G-Cter in ubiquitin)" evidence="11">
    <location>
        <position position="121"/>
    </location>
</feature>
<feature type="helix" evidence="12">
    <location>
        <begin position="39"/>
        <end position="49"/>
    </location>
</feature>
<feature type="helix" evidence="12">
    <location>
        <begin position="57"/>
        <end position="84"/>
    </location>
</feature>
<feature type="strand" evidence="12">
    <location>
        <begin position="88"/>
        <end position="90"/>
    </location>
</feature>
<feature type="helix" evidence="12">
    <location>
        <begin position="92"/>
        <end position="102"/>
    </location>
</feature>
<feature type="helix" evidence="12">
    <location>
        <begin position="105"/>
        <end position="124"/>
    </location>
</feature>
<proteinExistence type="evidence at protein level"/>
<reference key="1">
    <citation type="journal article" date="1987" name="Nucleic Acids Res.">
        <title>Structure and organization of the chicken H2B histone gene family.</title>
        <authorList>
            <person name="Grandy D.K."/>
            <person name="Dodgson J.B."/>
        </authorList>
    </citation>
    <scope>NUCLEOTIDE SEQUENCE [GENOMIC DNA]</scope>
    <source>
        <strain>White leghorn</strain>
        <tissue>Blood</tissue>
    </source>
</reference>
<reference key="2">
    <citation type="journal article" date="1991" name="Gene">
        <title>Nucleotide sequence of a member of the chicken H2B histone-encoding gene family.</title>
        <authorList>
            <person name="Nakayama T."/>
            <person name="Setoguchi Y."/>
        </authorList>
    </citation>
    <scope>NUCLEOTIDE SEQUENCE [GENOMIC DNA]</scope>
    <source>
        <strain>White leghorn</strain>
    </source>
</reference>
<reference key="3">
    <citation type="journal article" date="1996" name="DNA Res.">
        <title>Organization of the chicken histone genes in a major gene cluster and generation of an almost complete set of the core histone protein sequences.</title>
        <authorList>
            <person name="Takami Y."/>
            <person name="Higashio M."/>
            <person name="Fukuoka T."/>
            <person name="Takechi S."/>
            <person name="Nakayama T."/>
        </authorList>
    </citation>
    <scope>NUCLEOTIDE SEQUENCE [GENOMIC DNA]</scope>
    <scope>NOMENCLATURE</scope>
    <source>
        <strain>White leghorn</strain>
    </source>
</reference>
<reference key="4">
    <citation type="journal article" date="1989" name="Biochemistry">
        <title>Ubiquitinated histone H2B is preferentially located in transcriptionally active chromatin.</title>
        <authorList>
            <person name="Nickel B.E."/>
            <person name="Allis C.D."/>
            <person name="Davie J.R."/>
        </authorList>
    </citation>
    <scope>UBIQUITINATION</scope>
</reference>
<reference key="5">
    <citation type="journal article" date="2003" name="Cell">
        <title>Apoptotic phosphorylation of histone H2B is mediated by mammalian sterile twenty kinase.</title>
        <authorList>
            <person name="Cheung W.L."/>
            <person name="Ajiro K."/>
            <person name="Samejima K."/>
            <person name="Kloc M."/>
            <person name="Cheung P."/>
            <person name="Mizzen C.A."/>
            <person name="Beeser A."/>
            <person name="Etkin L.D."/>
            <person name="Chernoff J."/>
            <person name="Earnshaw W.C."/>
            <person name="Allis C.D."/>
        </authorList>
    </citation>
    <scope>PHOSPHORYLATION AT SER-15</scope>
</reference>
<reference key="6">
    <citation type="journal article" date="2003" name="J. Biol. Chem.">
        <title>Acetylation of histone H2B mirrors that of H4 and H3 at the chicken beta-globin locus but not at housekeeping genes.</title>
        <authorList>
            <person name="Myers F.A."/>
            <person name="Chong W."/>
            <person name="Evans D.R."/>
            <person name="Thorne A.W."/>
            <person name="Crane-Robinson C."/>
        </authorList>
    </citation>
    <scope>ACETYLATION AT LYS-6; LYS-13; LYS-16 AND LYS-21</scope>
</reference>
<reference key="7">
    <citation type="journal article" date="1991" name="Proc. Natl. Acad. Sci. U.S.A.">
        <title>The nucleosomal core histone octamer at 3.1 A resolution: a tripartite protein assembly and a left-handed superhelix.</title>
        <authorList>
            <person name="Arents G."/>
            <person name="Burlingame R.W."/>
            <person name="Wang B.-C."/>
            <person name="Love W.E."/>
            <person name="Moudrianakis E.N."/>
        </authorList>
    </citation>
    <scope>X-RAY CRYSTALLOGRAPHY (3.1 ANGSTROMS)</scope>
    <scope>SUBUNIT</scope>
</reference>
<reference key="8">
    <citation type="journal article" date="1996" name="Acta Crystallogr. D">
        <title>X-ray diffraction analysis of crystals containing twofold symmetric nucleosome core particles.</title>
        <authorList>
            <person name="Harp J.M."/>
            <person name="Uberbacher E.C."/>
            <person name="Roberson A.E."/>
            <person name="Palmer E.L."/>
            <person name="Gewiess A."/>
            <person name="Bunick G.J."/>
        </authorList>
    </citation>
    <scope>X-RAY CRYSTALLOGRAPHY (2.5 ANGSTROMS) OF NUCLEOSOME CORE COMPLEX</scope>
    <scope>SUBUNIT</scope>
</reference>
<reference key="9">
    <citation type="journal article" date="2003" name="Acta Crystallogr. D">
        <title>Structure of the histone-core octamer in KCl/phosphate crystals at 2.15 A resolution.</title>
        <authorList>
            <person name="Chantalat L."/>
            <person name="Nicholson J.M."/>
            <person name="Lambert S.J."/>
            <person name="Reid A.J."/>
            <person name="Donovan M.J."/>
            <person name="Reynolds C.D."/>
            <person name="Wood C.M."/>
            <person name="Baldwin J.P."/>
        </authorList>
    </citation>
    <scope>X-RAY CRYSTALLOGRAPHY (2.15 ANGSTROMS)</scope>
    <scope>SUBUNIT</scope>
</reference>
<evidence type="ECO:0000250" key="1"/>
<evidence type="ECO:0000250" key="2">
    <source>
        <dbReference type="UniProtKB" id="P33778"/>
    </source>
</evidence>
<evidence type="ECO:0000250" key="3">
    <source>
        <dbReference type="UniProtKB" id="P62807"/>
    </source>
</evidence>
<evidence type="ECO:0000256" key="4">
    <source>
        <dbReference type="SAM" id="MobiDB-lite"/>
    </source>
</evidence>
<evidence type="ECO:0000269" key="5">
    <source>
    </source>
</evidence>
<evidence type="ECO:0000269" key="6">
    <source>
    </source>
</evidence>
<evidence type="ECO:0000269" key="7">
    <source>
    </source>
</evidence>
<evidence type="ECO:0000269" key="8">
    <source>
    </source>
</evidence>
<evidence type="ECO:0000269" key="9">
    <source>
    </source>
</evidence>
<evidence type="ECO:0000305" key="10"/>
<evidence type="ECO:0000305" key="11">
    <source>
    </source>
</evidence>
<evidence type="ECO:0007829" key="12">
    <source>
        <dbReference type="PDB" id="1TZY"/>
    </source>
</evidence>
<comment type="function">
    <text>Core component of nucleosome. Nucleosomes wrap and compact DNA into chromatin, limiting DNA accessibility to the cellular machineries which require DNA as a template. Histones thereby play a central role in transcription regulation, DNA repair, DNA replication and chromosomal stability. DNA accessibility is regulated via a complex set of post-translational modifications of histones, also called histone code, and nucleosome remodeling.</text>
</comment>
<comment type="subunit">
    <text evidence="7 8 9">The nucleosome is a histone octamer containing two molecules each of H2A, H2B, H3 and H4 assembled in one H3-H4 heterotetramer and two H2A-H2B heterodimers. The octamer wraps approximately 147 bp of DNA.</text>
</comment>
<comment type="subcellular location">
    <subcellularLocation>
        <location>Nucleus</location>
    </subcellularLocation>
    <subcellularLocation>
        <location>Chromosome</location>
    </subcellularLocation>
</comment>
<comment type="PTM">
    <text evidence="2">Monoubiquitination of Lys-121 by the BRE1 gives a specific tag for epigenetic transcriptional activation and is also prerequisite for histone H3 'Lys-4' and 'Lys-79' methylation.</text>
</comment>
<comment type="PTM">
    <text evidence="5">Phosphorylated on Ser-15 during apoptosis; which facilitates apoptotic chromatin condensation.</text>
</comment>
<comment type="PTM">
    <text evidence="3">GlcNAcylation at Ser-113 promotes monoubiquitination of Lys-121. It fluctuates in response to extracellular glucose, and associates with transcribed genes (By similarity).</text>
</comment>
<comment type="similarity">
    <text evidence="10">Belongs to the histone H2B family.</text>
</comment>
<keyword id="KW-0002">3D-structure</keyword>
<keyword id="KW-0007">Acetylation</keyword>
<keyword id="KW-0158">Chromosome</keyword>
<keyword id="KW-0238">DNA-binding</keyword>
<keyword id="KW-0325">Glycoprotein</keyword>
<keyword id="KW-1017">Isopeptide bond</keyword>
<keyword id="KW-0544">Nucleosome core</keyword>
<keyword id="KW-0539">Nucleus</keyword>
<keyword id="KW-0597">Phosphoprotein</keyword>
<keyword id="KW-1185">Reference proteome</keyword>
<keyword id="KW-0832">Ubl conjugation</keyword>
<name>H2B7_CHICK</name>
<accession>P0C1H5</accession>
<accession>P02279</accession>
<organism>
    <name type="scientific">Gallus gallus</name>
    <name type="common">Chicken</name>
    <dbReference type="NCBI Taxonomy" id="9031"/>
    <lineage>
        <taxon>Eukaryota</taxon>
        <taxon>Metazoa</taxon>
        <taxon>Chordata</taxon>
        <taxon>Craniata</taxon>
        <taxon>Vertebrata</taxon>
        <taxon>Euteleostomi</taxon>
        <taxon>Archelosauria</taxon>
        <taxon>Archosauria</taxon>
        <taxon>Dinosauria</taxon>
        <taxon>Saurischia</taxon>
        <taxon>Theropoda</taxon>
        <taxon>Coelurosauria</taxon>
        <taxon>Aves</taxon>
        <taxon>Neognathae</taxon>
        <taxon>Galloanserae</taxon>
        <taxon>Galliformes</taxon>
        <taxon>Phasianidae</taxon>
        <taxon>Phasianinae</taxon>
        <taxon>Gallus</taxon>
    </lineage>
</organism>